<accession>O27397</accession>
<feature type="chain" id="PRO_0000058596" description="Probable N-glycosylase/DNA lyase">
    <location>
        <begin position="1"/>
        <end position="312"/>
    </location>
</feature>
<feature type="region of interest" description="Disordered" evidence="2">
    <location>
        <begin position="1"/>
        <end position="22"/>
    </location>
</feature>
<feature type="compositionally biased region" description="Polar residues" evidence="2">
    <location>
        <begin position="13"/>
        <end position="22"/>
    </location>
</feature>
<feature type="active site" evidence="1">
    <location>
        <position position="235"/>
    </location>
</feature>
<evidence type="ECO:0000250" key="1"/>
<evidence type="ECO:0000256" key="2">
    <source>
        <dbReference type="SAM" id="MobiDB-lite"/>
    </source>
</evidence>
<evidence type="ECO:0000305" key="3"/>
<gene>
    <name type="ordered locus">MTH_1342</name>
</gene>
<organism>
    <name type="scientific">Methanothermobacter thermautotrophicus (strain ATCC 29096 / DSM 1053 / JCM 10044 / NBRC 100330 / Delta H)</name>
    <name type="common">Methanobacterium thermoautotrophicum</name>
    <dbReference type="NCBI Taxonomy" id="187420"/>
    <lineage>
        <taxon>Archaea</taxon>
        <taxon>Methanobacteriati</taxon>
        <taxon>Methanobacteriota</taxon>
        <taxon>Methanomada group</taxon>
        <taxon>Methanobacteria</taxon>
        <taxon>Methanobacteriales</taxon>
        <taxon>Methanobacteriaceae</taxon>
        <taxon>Methanothermobacter</taxon>
    </lineage>
</organism>
<proteinExistence type="inferred from homology"/>
<protein>
    <recommendedName>
        <fullName>Probable N-glycosylase/DNA lyase</fullName>
    </recommendedName>
    <domain>
        <recommendedName>
            <fullName>8-oxoguanine DNA glycosylase</fullName>
            <ecNumber>3.2.2.-</ecNumber>
        </recommendedName>
    </domain>
    <domain>
        <recommendedName>
            <fullName>DNA-(apurinic or apyrimidinic site) lyase</fullName>
            <shortName>AP lyase</shortName>
            <ecNumber>4.2.99.18</ecNumber>
        </recommendedName>
    </domain>
</protein>
<comment type="function">
    <text evidence="1">DNA repair enzyme that incises DNA at 8-oxoG residues. Excises 7,8-dihydro-8-oxoguanine and 2,6-diamino-4-hydroxy-5-N-methylformamidopyrimidine (FAPY) from damaged DNA. Has a beta-lyase activity that nicks DNA 3' to the lesion (By similarity).</text>
</comment>
<comment type="catalytic activity">
    <reaction>
        <text>2'-deoxyribonucleotide-(2'-deoxyribose 5'-phosphate)-2'-deoxyribonucleotide-DNA = a 3'-end 2'-deoxyribonucleotide-(2,3-dehydro-2,3-deoxyribose 5'-phosphate)-DNA + a 5'-end 5'-phospho-2'-deoxyribonucleoside-DNA + H(+)</text>
        <dbReference type="Rhea" id="RHEA:66592"/>
        <dbReference type="Rhea" id="RHEA-COMP:13180"/>
        <dbReference type="Rhea" id="RHEA-COMP:16897"/>
        <dbReference type="Rhea" id="RHEA-COMP:17067"/>
        <dbReference type="ChEBI" id="CHEBI:15378"/>
        <dbReference type="ChEBI" id="CHEBI:136412"/>
        <dbReference type="ChEBI" id="CHEBI:157695"/>
        <dbReference type="ChEBI" id="CHEBI:167181"/>
        <dbReference type="EC" id="4.2.99.18"/>
    </reaction>
</comment>
<comment type="similarity">
    <text evidence="3">Belongs to the type-1 OGG1 family.</text>
</comment>
<sequence length="312" mass="36052">MRIPVGDFDLEMTQRSGQTSQPPWREVEGAFRELLIIEGVPCPVEVRNEAGVLRVRPYVDVPQKTLREKIEYIFDLKFDIEDFYTFLEDKNLSYTLDSSRGLRLFLAKDPFECVISSIASANCSVVRWTRSIEDIRRLWGQANTFNGETFHTFPSPHVLTGVAEGSLEDLQRAEDNLPSDFSFNDLRSCGVGYRAPYIRETSRILAEEMDIRRIDGMDYDDARELLLELSGVGPKVADCILLYGFRKTEAFPVDVWIRRIMNHIHPGRNFNDRSMVEFARREYGEMADYVQLYLFNHARRSGLLDRLRQGTG</sequence>
<dbReference type="EC" id="3.2.2.-"/>
<dbReference type="EC" id="4.2.99.18"/>
<dbReference type="EMBL" id="AE000666">
    <property type="protein sequence ID" value="AAB85820.1"/>
    <property type="molecule type" value="Genomic_DNA"/>
</dbReference>
<dbReference type="PIR" id="E69045">
    <property type="entry name" value="E69045"/>
</dbReference>
<dbReference type="RefSeq" id="WP_010876955.1">
    <property type="nucleotide sequence ID" value="NC_000916.1"/>
</dbReference>
<dbReference type="SMR" id="O27397"/>
<dbReference type="STRING" id="187420.MTH_1342"/>
<dbReference type="PaxDb" id="187420-MTH_1342"/>
<dbReference type="EnsemblBacteria" id="AAB85820">
    <property type="protein sequence ID" value="AAB85820"/>
    <property type="gene ID" value="MTH_1342"/>
</dbReference>
<dbReference type="GeneID" id="1471059"/>
<dbReference type="KEGG" id="mth:MTH_1342"/>
<dbReference type="HOGENOM" id="CLU_027543_3_0_2"/>
<dbReference type="InParanoid" id="O27397"/>
<dbReference type="Proteomes" id="UP000005223">
    <property type="component" value="Chromosome"/>
</dbReference>
<dbReference type="GO" id="GO:0034039">
    <property type="term" value="F:8-oxo-7,8-dihydroguanine DNA N-glycosylase activity"/>
    <property type="evidence" value="ECO:0007669"/>
    <property type="project" value="InterPro"/>
</dbReference>
<dbReference type="GO" id="GO:0140078">
    <property type="term" value="F:class I DNA-(apurinic or apyrimidinic site) endonuclease activity"/>
    <property type="evidence" value="ECO:0007669"/>
    <property type="project" value="UniProtKB-EC"/>
</dbReference>
<dbReference type="GO" id="GO:0003684">
    <property type="term" value="F:damaged DNA binding"/>
    <property type="evidence" value="ECO:0007669"/>
    <property type="project" value="InterPro"/>
</dbReference>
<dbReference type="GO" id="GO:0006284">
    <property type="term" value="P:base-excision repair"/>
    <property type="evidence" value="ECO:0007669"/>
    <property type="project" value="InterPro"/>
</dbReference>
<dbReference type="GO" id="GO:0006289">
    <property type="term" value="P:nucleotide-excision repair"/>
    <property type="evidence" value="ECO:0007669"/>
    <property type="project" value="InterPro"/>
</dbReference>
<dbReference type="CDD" id="cd00056">
    <property type="entry name" value="ENDO3c"/>
    <property type="match status" value="1"/>
</dbReference>
<dbReference type="Gene3D" id="1.10.1670.10">
    <property type="entry name" value="Helix-hairpin-Helix base-excision DNA repair enzymes (C-terminal)"/>
    <property type="match status" value="1"/>
</dbReference>
<dbReference type="Gene3D" id="1.10.340.30">
    <property type="entry name" value="Hypothetical protein, domain 2"/>
    <property type="match status" value="1"/>
</dbReference>
<dbReference type="InterPro" id="IPR011257">
    <property type="entry name" value="DNA_glycosylase"/>
</dbReference>
<dbReference type="InterPro" id="IPR003265">
    <property type="entry name" value="HhH-GPD_domain"/>
</dbReference>
<dbReference type="InterPro" id="IPR023170">
    <property type="entry name" value="HhH_base_excis_C"/>
</dbReference>
<dbReference type="InterPro" id="IPR004577">
    <property type="entry name" value="Ogg1"/>
</dbReference>
<dbReference type="InterPro" id="IPR012904">
    <property type="entry name" value="OGG_N"/>
</dbReference>
<dbReference type="InterPro" id="IPR052054">
    <property type="entry name" value="Oxidative_DNA_repair_enzyme"/>
</dbReference>
<dbReference type="NCBIfam" id="TIGR00588">
    <property type="entry name" value="ogg"/>
    <property type="match status" value="1"/>
</dbReference>
<dbReference type="PANTHER" id="PTHR10242">
    <property type="entry name" value="8-OXOGUANINE DNA GLYCOSYLASE"/>
    <property type="match status" value="1"/>
</dbReference>
<dbReference type="PANTHER" id="PTHR10242:SF2">
    <property type="entry name" value="N-GLYCOSYLASE_DNA LYASE"/>
    <property type="match status" value="1"/>
</dbReference>
<dbReference type="Pfam" id="PF00730">
    <property type="entry name" value="HhH-GPD"/>
    <property type="match status" value="1"/>
</dbReference>
<dbReference type="Pfam" id="PF07934">
    <property type="entry name" value="OGG_N"/>
    <property type="match status" value="1"/>
</dbReference>
<dbReference type="SMART" id="SM00478">
    <property type="entry name" value="ENDO3c"/>
    <property type="match status" value="1"/>
</dbReference>
<dbReference type="SUPFAM" id="SSF48150">
    <property type="entry name" value="DNA-glycosylase"/>
    <property type="match status" value="1"/>
</dbReference>
<reference key="1">
    <citation type="journal article" date="1997" name="J. Bacteriol.">
        <title>Complete genome sequence of Methanobacterium thermoautotrophicum deltaH: functional analysis and comparative genomics.</title>
        <authorList>
            <person name="Smith D.R."/>
            <person name="Doucette-Stamm L.A."/>
            <person name="Deloughery C."/>
            <person name="Lee H.-M."/>
            <person name="Dubois J."/>
            <person name="Aldredge T."/>
            <person name="Bashirzadeh R."/>
            <person name="Blakely D."/>
            <person name="Cook R."/>
            <person name="Gilbert K."/>
            <person name="Harrison D."/>
            <person name="Hoang L."/>
            <person name="Keagle P."/>
            <person name="Lumm W."/>
            <person name="Pothier B."/>
            <person name="Qiu D."/>
            <person name="Spadafora R."/>
            <person name="Vicare R."/>
            <person name="Wang Y."/>
            <person name="Wierzbowski J."/>
            <person name="Gibson R."/>
            <person name="Jiwani N."/>
            <person name="Caruso A."/>
            <person name="Bush D."/>
            <person name="Safer H."/>
            <person name="Patwell D."/>
            <person name="Prabhakar S."/>
            <person name="McDougall S."/>
            <person name="Shimer G."/>
            <person name="Goyal A."/>
            <person name="Pietrovski S."/>
            <person name="Church G.M."/>
            <person name="Daniels C.J."/>
            <person name="Mao J.-I."/>
            <person name="Rice P."/>
            <person name="Noelling J."/>
            <person name="Reeve J.N."/>
        </authorList>
    </citation>
    <scope>NUCLEOTIDE SEQUENCE [LARGE SCALE GENOMIC DNA]</scope>
    <source>
        <strain>ATCC 29096 / DSM 1053 / JCM 10044 / NBRC 100330 / Delta H</strain>
    </source>
</reference>
<keyword id="KW-0227">DNA damage</keyword>
<keyword id="KW-0234">DNA repair</keyword>
<keyword id="KW-0326">Glycosidase</keyword>
<keyword id="KW-0378">Hydrolase</keyword>
<keyword id="KW-0456">Lyase</keyword>
<keyword id="KW-0511">Multifunctional enzyme</keyword>
<keyword id="KW-1185">Reference proteome</keyword>
<name>OGG1_METTH</name>